<gene>
    <name evidence="4" type="primary">PWWP4</name>
</gene>
<comment type="similarity">
    <text evidence="3">Belongs to the PWWP3A family.</text>
</comment>
<comment type="caution">
    <text evidence="3">Product of a dubious CDS prediction.</text>
</comment>
<protein>
    <recommendedName>
        <fullName evidence="3">Putative PWWP domain-containing DNA repair factor 4</fullName>
    </recommendedName>
</protein>
<evidence type="ECO:0000255" key="1">
    <source>
        <dbReference type="PROSITE-ProRule" id="PRU00162"/>
    </source>
</evidence>
<evidence type="ECO:0000256" key="2">
    <source>
        <dbReference type="SAM" id="MobiDB-lite"/>
    </source>
</evidence>
<evidence type="ECO:0000305" key="3"/>
<evidence type="ECO:0000312" key="4">
    <source>
        <dbReference type="HGNC" id="HGNC:55197"/>
    </source>
</evidence>
<organism>
    <name type="scientific">Homo sapiens</name>
    <name type="common">Human</name>
    <dbReference type="NCBI Taxonomy" id="9606"/>
    <lineage>
        <taxon>Eukaryota</taxon>
        <taxon>Metazoa</taxon>
        <taxon>Chordata</taxon>
        <taxon>Craniata</taxon>
        <taxon>Vertebrata</taxon>
        <taxon>Euteleostomi</taxon>
        <taxon>Mammalia</taxon>
        <taxon>Eutheria</taxon>
        <taxon>Euarchontoglires</taxon>
        <taxon>Primates</taxon>
        <taxon>Haplorrhini</taxon>
        <taxon>Catarrhini</taxon>
        <taxon>Hominidae</taxon>
        <taxon>Homo</taxon>
    </lineage>
</organism>
<proteinExistence type="uncertain"/>
<name>PWWP4_HUMAN</name>
<keyword id="KW-1267">Proteomics identification</keyword>
<keyword id="KW-1185">Reference proteome</keyword>
<reference key="1">
    <citation type="journal article" date="2005" name="Nature">
        <title>The DNA sequence of the human X chromosome.</title>
        <authorList>
            <person name="Ross M.T."/>
            <person name="Grafham D.V."/>
            <person name="Coffey A.J."/>
            <person name="Scherer S."/>
            <person name="McLay K."/>
            <person name="Muzny D."/>
            <person name="Platzer M."/>
            <person name="Howell G.R."/>
            <person name="Burrows C."/>
            <person name="Bird C.P."/>
            <person name="Frankish A."/>
            <person name="Lovell F.L."/>
            <person name="Howe K.L."/>
            <person name="Ashurst J.L."/>
            <person name="Fulton R.S."/>
            <person name="Sudbrak R."/>
            <person name="Wen G."/>
            <person name="Jones M.C."/>
            <person name="Hurles M.E."/>
            <person name="Andrews T.D."/>
            <person name="Scott C.E."/>
            <person name="Searle S."/>
            <person name="Ramser J."/>
            <person name="Whittaker A."/>
            <person name="Deadman R."/>
            <person name="Carter N.P."/>
            <person name="Hunt S.E."/>
            <person name="Chen R."/>
            <person name="Cree A."/>
            <person name="Gunaratne P."/>
            <person name="Havlak P."/>
            <person name="Hodgson A."/>
            <person name="Metzker M.L."/>
            <person name="Richards S."/>
            <person name="Scott G."/>
            <person name="Steffen D."/>
            <person name="Sodergren E."/>
            <person name="Wheeler D.A."/>
            <person name="Worley K.C."/>
            <person name="Ainscough R."/>
            <person name="Ambrose K.D."/>
            <person name="Ansari-Lari M.A."/>
            <person name="Aradhya S."/>
            <person name="Ashwell R.I."/>
            <person name="Babbage A.K."/>
            <person name="Bagguley C.L."/>
            <person name="Ballabio A."/>
            <person name="Banerjee R."/>
            <person name="Barker G.E."/>
            <person name="Barlow K.F."/>
            <person name="Barrett I.P."/>
            <person name="Bates K.N."/>
            <person name="Beare D.M."/>
            <person name="Beasley H."/>
            <person name="Beasley O."/>
            <person name="Beck A."/>
            <person name="Bethel G."/>
            <person name="Blechschmidt K."/>
            <person name="Brady N."/>
            <person name="Bray-Allen S."/>
            <person name="Bridgeman A.M."/>
            <person name="Brown A.J."/>
            <person name="Brown M.J."/>
            <person name="Bonnin D."/>
            <person name="Bruford E.A."/>
            <person name="Buhay C."/>
            <person name="Burch P."/>
            <person name="Burford D."/>
            <person name="Burgess J."/>
            <person name="Burrill W."/>
            <person name="Burton J."/>
            <person name="Bye J.M."/>
            <person name="Carder C."/>
            <person name="Carrel L."/>
            <person name="Chako J."/>
            <person name="Chapman J.C."/>
            <person name="Chavez D."/>
            <person name="Chen E."/>
            <person name="Chen G."/>
            <person name="Chen Y."/>
            <person name="Chen Z."/>
            <person name="Chinault C."/>
            <person name="Ciccodicola A."/>
            <person name="Clark S.Y."/>
            <person name="Clarke G."/>
            <person name="Clee C.M."/>
            <person name="Clegg S."/>
            <person name="Clerc-Blankenburg K."/>
            <person name="Clifford K."/>
            <person name="Cobley V."/>
            <person name="Cole C.G."/>
            <person name="Conquer J.S."/>
            <person name="Corby N."/>
            <person name="Connor R.E."/>
            <person name="David R."/>
            <person name="Davies J."/>
            <person name="Davis C."/>
            <person name="Davis J."/>
            <person name="Delgado O."/>
            <person name="Deshazo D."/>
            <person name="Dhami P."/>
            <person name="Ding Y."/>
            <person name="Dinh H."/>
            <person name="Dodsworth S."/>
            <person name="Draper H."/>
            <person name="Dugan-Rocha S."/>
            <person name="Dunham A."/>
            <person name="Dunn M."/>
            <person name="Durbin K.J."/>
            <person name="Dutta I."/>
            <person name="Eades T."/>
            <person name="Ellwood M."/>
            <person name="Emery-Cohen A."/>
            <person name="Errington H."/>
            <person name="Evans K.L."/>
            <person name="Faulkner L."/>
            <person name="Francis F."/>
            <person name="Frankland J."/>
            <person name="Fraser A.E."/>
            <person name="Galgoczy P."/>
            <person name="Gilbert J."/>
            <person name="Gill R."/>
            <person name="Gloeckner G."/>
            <person name="Gregory S.G."/>
            <person name="Gribble S."/>
            <person name="Griffiths C."/>
            <person name="Grocock R."/>
            <person name="Gu Y."/>
            <person name="Gwilliam R."/>
            <person name="Hamilton C."/>
            <person name="Hart E.A."/>
            <person name="Hawes A."/>
            <person name="Heath P.D."/>
            <person name="Heitmann K."/>
            <person name="Hennig S."/>
            <person name="Hernandez J."/>
            <person name="Hinzmann B."/>
            <person name="Ho S."/>
            <person name="Hoffs M."/>
            <person name="Howden P.J."/>
            <person name="Huckle E.J."/>
            <person name="Hume J."/>
            <person name="Hunt P.J."/>
            <person name="Hunt A.R."/>
            <person name="Isherwood J."/>
            <person name="Jacob L."/>
            <person name="Johnson D."/>
            <person name="Jones S."/>
            <person name="de Jong P.J."/>
            <person name="Joseph S.S."/>
            <person name="Keenan S."/>
            <person name="Kelly S."/>
            <person name="Kershaw J.K."/>
            <person name="Khan Z."/>
            <person name="Kioschis P."/>
            <person name="Klages S."/>
            <person name="Knights A.J."/>
            <person name="Kosiura A."/>
            <person name="Kovar-Smith C."/>
            <person name="Laird G.K."/>
            <person name="Langford C."/>
            <person name="Lawlor S."/>
            <person name="Leversha M."/>
            <person name="Lewis L."/>
            <person name="Liu W."/>
            <person name="Lloyd C."/>
            <person name="Lloyd D.M."/>
            <person name="Loulseged H."/>
            <person name="Loveland J.E."/>
            <person name="Lovell J.D."/>
            <person name="Lozado R."/>
            <person name="Lu J."/>
            <person name="Lyne R."/>
            <person name="Ma J."/>
            <person name="Maheshwari M."/>
            <person name="Matthews L.H."/>
            <person name="McDowall J."/>
            <person name="McLaren S."/>
            <person name="McMurray A."/>
            <person name="Meidl P."/>
            <person name="Meitinger T."/>
            <person name="Milne S."/>
            <person name="Miner G."/>
            <person name="Mistry S.L."/>
            <person name="Morgan M."/>
            <person name="Morris S."/>
            <person name="Mueller I."/>
            <person name="Mullikin J.C."/>
            <person name="Nguyen N."/>
            <person name="Nordsiek G."/>
            <person name="Nyakatura G."/>
            <person name="O'dell C.N."/>
            <person name="Okwuonu G."/>
            <person name="Palmer S."/>
            <person name="Pandian R."/>
            <person name="Parker D."/>
            <person name="Parrish J."/>
            <person name="Pasternak S."/>
            <person name="Patel D."/>
            <person name="Pearce A.V."/>
            <person name="Pearson D.M."/>
            <person name="Pelan S.E."/>
            <person name="Perez L."/>
            <person name="Porter K.M."/>
            <person name="Ramsey Y."/>
            <person name="Reichwald K."/>
            <person name="Rhodes S."/>
            <person name="Ridler K.A."/>
            <person name="Schlessinger D."/>
            <person name="Schueler M.G."/>
            <person name="Sehra H.K."/>
            <person name="Shaw-Smith C."/>
            <person name="Shen H."/>
            <person name="Sheridan E.M."/>
            <person name="Shownkeen R."/>
            <person name="Skuce C.D."/>
            <person name="Smith M.L."/>
            <person name="Sotheran E.C."/>
            <person name="Steingruber H.E."/>
            <person name="Steward C.A."/>
            <person name="Storey R."/>
            <person name="Swann R.M."/>
            <person name="Swarbreck D."/>
            <person name="Tabor P.E."/>
            <person name="Taudien S."/>
            <person name="Taylor T."/>
            <person name="Teague B."/>
            <person name="Thomas K."/>
            <person name="Thorpe A."/>
            <person name="Timms K."/>
            <person name="Tracey A."/>
            <person name="Trevanion S."/>
            <person name="Tromans A.C."/>
            <person name="d'Urso M."/>
            <person name="Verduzco D."/>
            <person name="Villasana D."/>
            <person name="Waldron L."/>
            <person name="Wall M."/>
            <person name="Wang Q."/>
            <person name="Warren J."/>
            <person name="Warry G.L."/>
            <person name="Wei X."/>
            <person name="West A."/>
            <person name="Whitehead S.L."/>
            <person name="Whiteley M.N."/>
            <person name="Wilkinson J.E."/>
            <person name="Willey D.L."/>
            <person name="Williams G."/>
            <person name="Williams L."/>
            <person name="Williamson A."/>
            <person name="Williamson H."/>
            <person name="Wilming L."/>
            <person name="Woodmansey R.L."/>
            <person name="Wray P.W."/>
            <person name="Yen J."/>
            <person name="Zhang J."/>
            <person name="Zhou J."/>
            <person name="Zoghbi H."/>
            <person name="Zorilla S."/>
            <person name="Buck D."/>
            <person name="Reinhardt R."/>
            <person name="Poustka A."/>
            <person name="Rosenthal A."/>
            <person name="Lehrach H."/>
            <person name="Meindl A."/>
            <person name="Minx P.J."/>
            <person name="Hillier L.W."/>
            <person name="Willard H.F."/>
            <person name="Wilson R.K."/>
            <person name="Waterston R.H."/>
            <person name="Rice C.M."/>
            <person name="Vaudin M."/>
            <person name="Coulson A."/>
            <person name="Nelson D.L."/>
            <person name="Weinstock G."/>
            <person name="Sulston J.E."/>
            <person name="Durbin R.M."/>
            <person name="Hubbard T."/>
            <person name="Gibbs R.A."/>
            <person name="Beck S."/>
            <person name="Rogers J."/>
            <person name="Bentley D.R."/>
        </authorList>
    </citation>
    <scope>NUCLEOTIDE SEQUENCE [LARGE SCALE GENOMIC DNA]</scope>
</reference>
<accession>A0A494C071</accession>
<dbReference type="EMBL" id="AC236972">
    <property type="status" value="NOT_ANNOTATED_CDS"/>
    <property type="molecule type" value="Genomic_DNA"/>
</dbReference>
<dbReference type="CCDS" id="CCDS94692.1"/>
<dbReference type="RefSeq" id="NP_001382925.1">
    <property type="nucleotide sequence ID" value="NM_001395996.1"/>
</dbReference>
<dbReference type="RefSeq" id="XP_047298374.1">
    <property type="nucleotide sequence ID" value="XM_047442418.1"/>
</dbReference>
<dbReference type="SMR" id="A0A494C071"/>
<dbReference type="STRING" id="9606.ENSP00000498408"/>
<dbReference type="GlyGen" id="A0A494C071">
    <property type="glycosylation" value="53 sites"/>
</dbReference>
<dbReference type="MassIVE" id="A0A494C071"/>
<dbReference type="PeptideAtlas" id="A0A494C071"/>
<dbReference type="Ensembl" id="ENST00000458091.5">
    <property type="protein sequence ID" value="ENSP00000498408.1"/>
    <property type="gene ID" value="ENSG00000278803.3"/>
</dbReference>
<dbReference type="GeneID" id="728317"/>
<dbReference type="MANE-Select" id="ENST00000458091.5">
    <property type="protein sequence ID" value="ENSP00000498408.1"/>
    <property type="RefSeq nucleotide sequence ID" value="NM_001395996.1"/>
    <property type="RefSeq protein sequence ID" value="NP_001382925.1"/>
</dbReference>
<dbReference type="AGR" id="HGNC:55197"/>
<dbReference type="GeneCards" id="PWWP4"/>
<dbReference type="HGNC" id="HGNC:55197">
    <property type="gene designation" value="PWWP4"/>
</dbReference>
<dbReference type="VEuPathDB" id="HostDB:ENSG00000278803"/>
<dbReference type="GeneTree" id="ENSGT00390000001700"/>
<dbReference type="InParanoid" id="A0A494C071"/>
<dbReference type="OMA" id="CPLCEIW"/>
<dbReference type="PRO" id="PR:A0A494C071"/>
<dbReference type="Proteomes" id="UP000005640">
    <property type="component" value="Chromosome X"/>
</dbReference>
<dbReference type="Bgee" id="ENSG00000278803">
    <property type="expression patterns" value="Expressed in nucleus accumbens and 7 other cell types or tissues"/>
</dbReference>
<dbReference type="CDD" id="cd06080">
    <property type="entry name" value="PWWP_MUM1-like"/>
    <property type="match status" value="1"/>
</dbReference>
<dbReference type="FunFam" id="2.30.30.140:FF:000063">
    <property type="entry name" value="PWWP domain-containing DNA repair factor 3A"/>
    <property type="match status" value="1"/>
</dbReference>
<dbReference type="Gene3D" id="2.30.30.140">
    <property type="match status" value="1"/>
</dbReference>
<dbReference type="Gene3D" id="6.10.300.20">
    <property type="match status" value="1"/>
</dbReference>
<dbReference type="InterPro" id="IPR035504">
    <property type="entry name" value="MUM1-like_PWWP"/>
</dbReference>
<dbReference type="InterPro" id="IPR040263">
    <property type="entry name" value="PWP3A_3B_4"/>
</dbReference>
<dbReference type="InterPro" id="IPR048795">
    <property type="entry name" value="PWP3A_3B_4_C"/>
</dbReference>
<dbReference type="InterPro" id="IPR048765">
    <property type="entry name" value="PWP3A_3B_4_N"/>
</dbReference>
<dbReference type="PANTHER" id="PTHR31333">
    <property type="entry name" value="PWWP DOMAIN-CONTAINING DNA REPAIR FACTOR 3 FAMILY MEMBER"/>
    <property type="match status" value="1"/>
</dbReference>
<dbReference type="PANTHER" id="PTHR31333:SF2">
    <property type="entry name" value="PWWP DOMAIN-CONTAINING DNA REPAIR FACTOR 4"/>
    <property type="match status" value="1"/>
</dbReference>
<dbReference type="Pfam" id="PF20884">
    <property type="entry name" value="MUM1-like_PWWP"/>
    <property type="match status" value="1"/>
</dbReference>
<dbReference type="Pfam" id="PF20886">
    <property type="entry name" value="PWP3A-B_C"/>
    <property type="match status" value="1"/>
</dbReference>
<dbReference type="Pfam" id="PF20887">
    <property type="entry name" value="PWP3A-B_N"/>
    <property type="match status" value="1"/>
</dbReference>
<dbReference type="SUPFAM" id="SSF63748">
    <property type="entry name" value="Tudor/PWWP/MBT"/>
    <property type="match status" value="1"/>
</dbReference>
<sequence>MDSEYVLCSWKGRLWPAKVLCTRGTSPKTKPEKAISLEVQILAVDEKIKVKSTDVKTPTKFEMEDIAASAAAQTKLGAPLREKMGYRGTLRVALEILKERTNLGGGRKPHELESTTPSQLSQKVPEKPASSVPREDDWRCKGDLRRSLGKRENPSSPTVPSESKRALRDDRSQEPTAIAPTPGALPGDRSGAPRAIAPTPGAMLSGRSRARRAIAPTPSALRGYRSWAHRAIAPTPGCLYSDRSRAHRAIAPARGTKHGGRSWACRSIAPKPGSLCGDRSQASRAIDPTLGARRGGRSRAHRAIAPTPGSLCGNRSRACGAIALTPGVLCGVRSRVPKDITPTPGALRGYKSWVCRAIAPTPGALRGDRSAARTAVVRTPGALGRDRSRARSAIASTPGTLQGNRSSVSKAIAPTPGALRGDRSAARTAFVPTPGALHRDRSRARSAIASTPGTLRGNTSSACKAIAPTPGALRGYKSWARRAIAPNPGAWRGYRSTTGTAIAPNLGALGGNRSAARTDIAPTPGALRGYRSWTRRAIAPTPGTLSSYRSRSRRTIASTPATLRGEKSRAHTSLAPTPGALRGDGSRARRAIVPTTCPLCEIWSRVGIGIAPIADALRRDRSPVRRAIAPTPGTLSGYRSRARTAIAPTPGTLRGYRPRSRRAIASTPATLRGEKSRAHTSLAPAPGALRGDGSRARRAIVPTTCPLCEIWSRVGIGIAPIADALRRDRPPVRRAIAPTPGALRCDRSRELTAIDPTPGALCSDRSGASRAIAPTPGTLCSERSRVRRAIAPTPCALCGKGSQVGMGVAPTPGALRRDRSQAGRAIAPTPSALFRVGSRVGTGIALPAGALHRDRSPVRRAVAPTPGTLHCDGSRKCTATGSTPGALPGDRSGVSKATAPAPGALCSERSRARRSIAPTPCLLCGDRSWVGMGIAPTPGALLGGKSRKCRAIAITPGALRGGRSQKRRVVAPTPEALHGDGSWTYMAIAPTPGALHGDSSPAHTSIIPSPGALHGDGPPAHMAFPSTPGTLHGDASHAHMAIAPTPGTMRGDSSTARTATAPSPGALRGDRSWKRKAIASTPGALHGNRSDRSRKCKAIASTPGTLHVERSPALRAIVPTPGTLGRDSSPGRTSIIPSPGALHGDRSPAHLDIASTPGALHGDSSQAHTAIAPTPGTMRGDSSTARMAIAPSAGALRGDRSWKRKAIASTPGALRGNRSDRSRKRKAIASTPGALLGNRSDRSRKHKAIAPTPGAPRIDRSPACRAIAPTPGALGDDSSTAIAPTPGTPRGDSSPANTAIASTPGALHGDTSQTHKAIAPTPGDLGGGSSSAHKAITPSPGALHGDRSPAHTAIASTPGALHGDSSQVHTTIAPTPGALRDDKSWKRKAIAPTPGTLHCDSSRTCTAFAPTPGALHADRSPAHQDITLTSGALHCDSSRESRAVAPILGALHRVGSQAHKAIASTPGPLRGDSSPFHTAIAPMPGALHGTRSWKREAISQTPFVTLCGDSSGERMAIAPTPGALHSDRSQTHTAIDPTPSVLRSDSSPACMAIDPTPGALGRDRSQALMAIAPTPVGMQAHVLQSPRACQDSLTLSRHVCEKKGKKRANASTLMSLPPTVTEEGASLPPGLTSPAPPALKEETQDSRPKKALAASPESSPFSGNIQDPGEGAWKPGWAGMAASSGSRQHRLPSSLRLANRKRKRPGPDFQRRPQGPQTPGDAKLANPVTTIQRAGGKQDGQPPSLAFPQEPHPIERGTMVWFKFQDHPFWPAVVKSVSNTDKTARVLLLEANLHHGKRGIQVPLRRLKHLDCKEKEKLLKRAQKAYKQSVNWCFSLISHYREGLVRGSFRGSFLDYYAADISYPIRRAIQEGDLQIDFPKVNYGDLEDWEEETSLGGKRPCKKILPDRMRASWDRDNQKLVDFIVRRKGADPHLLDILQGRKQSRWLTAFLKPHRDLHCIETYLEDDDQLEVVAKHLQEIYKQIDKARLTLIRDDKVNFVLEVLLPEAMICTIAALDGLDYKAAEEKYLRGPPVHYREKELFDRNILKKARREPATTHTAN</sequence>
<feature type="chain" id="PRO_0000457396" description="Putative PWWP domain-containing DNA repair factor 4">
    <location>
        <begin position="1"/>
        <end position="2061"/>
    </location>
</feature>
<feature type="domain" description="PWWP" evidence="1">
    <location>
        <begin position="1756"/>
        <end position="1817"/>
    </location>
</feature>
<feature type="region of interest" description="Disordered" evidence="2">
    <location>
        <begin position="101"/>
        <end position="211"/>
    </location>
</feature>
<feature type="region of interest" description="Disordered" evidence="2">
    <location>
        <begin position="382"/>
        <end position="408"/>
    </location>
</feature>
<feature type="region of interest" description="Disordered" evidence="2">
    <location>
        <begin position="541"/>
        <end position="586"/>
    </location>
</feature>
<feature type="region of interest" description="Disordered" evidence="2">
    <location>
        <begin position="668"/>
        <end position="694"/>
    </location>
</feature>
<feature type="region of interest" description="Disordered" evidence="2">
    <location>
        <begin position="864"/>
        <end position="910"/>
    </location>
</feature>
<feature type="region of interest" description="Disordered" evidence="2">
    <location>
        <begin position="1046"/>
        <end position="1072"/>
    </location>
</feature>
<feature type="region of interest" description="Disordered" evidence="2">
    <location>
        <begin position="1159"/>
        <end position="1182"/>
    </location>
</feature>
<feature type="region of interest" description="Disordered" evidence="2">
    <location>
        <begin position="1205"/>
        <end position="1383"/>
    </location>
</feature>
<feature type="region of interest" description="Disordered" evidence="2">
    <location>
        <begin position="1521"/>
        <end position="1548"/>
    </location>
</feature>
<feature type="region of interest" description="Disordered" evidence="2">
    <location>
        <begin position="1602"/>
        <end position="1726"/>
    </location>
</feature>
<feature type="compositionally biased region" description="Basic and acidic residues" evidence="2">
    <location>
        <begin position="133"/>
        <end position="153"/>
    </location>
</feature>
<feature type="compositionally biased region" description="Basic and acidic residues" evidence="2">
    <location>
        <begin position="162"/>
        <end position="173"/>
    </location>
</feature>
<feature type="compositionally biased region" description="Polar residues" evidence="2">
    <location>
        <begin position="397"/>
        <end position="408"/>
    </location>
</feature>
<feature type="compositionally biased region" description="Polar residues" evidence="2">
    <location>
        <begin position="1051"/>
        <end position="1061"/>
    </location>
</feature>
<feature type="compositionally biased region" description="Polar residues" evidence="2">
    <location>
        <begin position="1364"/>
        <end position="1373"/>
    </location>
</feature>
<feature type="compositionally biased region" description="Basic and acidic residues" evidence="2">
    <location>
        <begin position="1639"/>
        <end position="1648"/>
    </location>
</feature>
<feature type="compositionally biased region" description="Polar residues" evidence="2">
    <location>
        <begin position="1656"/>
        <end position="1665"/>
    </location>
</feature>